<protein>
    <recommendedName>
        <fullName>Phosphatase and actin regulator 1</fullName>
    </recommendedName>
</protein>
<name>PHAR1_CHICK</name>
<accession>Q801X6</accession>
<gene>
    <name type="primary">PHACTR1</name>
    <name type="synonym">DDSG1</name>
</gene>
<proteinExistence type="evidence at transcript level"/>
<organism>
    <name type="scientific">Gallus gallus</name>
    <name type="common">Chicken</name>
    <dbReference type="NCBI Taxonomy" id="9031"/>
    <lineage>
        <taxon>Eukaryota</taxon>
        <taxon>Metazoa</taxon>
        <taxon>Chordata</taxon>
        <taxon>Craniata</taxon>
        <taxon>Vertebrata</taxon>
        <taxon>Euteleostomi</taxon>
        <taxon>Archelosauria</taxon>
        <taxon>Archosauria</taxon>
        <taxon>Dinosauria</taxon>
        <taxon>Saurischia</taxon>
        <taxon>Theropoda</taxon>
        <taxon>Coelurosauria</taxon>
        <taxon>Aves</taxon>
        <taxon>Neognathae</taxon>
        <taxon>Galloanserae</taxon>
        <taxon>Galliformes</taxon>
        <taxon>Phasianidae</taxon>
        <taxon>Phasianinae</taxon>
        <taxon>Gallus</taxon>
    </lineage>
</organism>
<keyword id="KW-0009">Actin-binding</keyword>
<keyword id="KW-0963">Cytoplasm</keyword>
<keyword id="KW-0539">Nucleus</keyword>
<keyword id="KW-0650">Protein phosphatase inhibitor</keyword>
<keyword id="KW-1185">Reference proteome</keyword>
<keyword id="KW-0677">Repeat</keyword>
<keyword id="KW-0770">Synapse</keyword>
<comment type="function">
    <text evidence="1">Binds actin monomers (G actin) and plays a role in the reorganization of the actin cytoskeleton and in formation of actin stress fibers.</text>
</comment>
<comment type="subunit">
    <text evidence="1">Interacts (via RPEL repeats) with ACTA1.</text>
</comment>
<comment type="subcellular location">
    <subcellularLocation>
        <location evidence="1">Cytoplasm</location>
    </subcellularLocation>
    <subcellularLocation>
        <location evidence="1">Synapse</location>
    </subcellularLocation>
    <subcellularLocation>
        <location evidence="1">Nucleus</location>
    </subcellularLocation>
    <text evidence="1">Enriched at synapses (By similarity). Cytoplasmic in resting cells, and is imported into the nucleus upon serum stimulation. Interaction with actin prevents nuclear import (By similarity).</text>
</comment>
<comment type="tissue specificity">
    <text evidence="3">Expressed in the gizzard, and in neurons from central and peripheral nervous systems.</text>
</comment>
<comment type="domain">
    <text evidence="1">Binds three actin monomers via the three C-terminal RPEL repeats.</text>
</comment>
<comment type="similarity">
    <text evidence="4">Belongs to the phosphatase and actin regulator family.</text>
</comment>
<dbReference type="EMBL" id="AB100407">
    <property type="protein sequence ID" value="BAC67215.1"/>
    <property type="molecule type" value="mRNA"/>
</dbReference>
<dbReference type="RefSeq" id="NP_989777.1">
    <property type="nucleotide sequence ID" value="NM_204446.1"/>
</dbReference>
<dbReference type="SMR" id="Q801X6"/>
<dbReference type="FunCoup" id="Q801X6">
    <property type="interactions" value="221"/>
</dbReference>
<dbReference type="STRING" id="9031.ENSGALP00000067645"/>
<dbReference type="PaxDb" id="9031-ENSGALP00000036468"/>
<dbReference type="KEGG" id="gga:395093"/>
<dbReference type="VEuPathDB" id="HostDB:geneid_395093"/>
<dbReference type="eggNOG" id="KOG4339">
    <property type="taxonomic scope" value="Eukaryota"/>
</dbReference>
<dbReference type="InParanoid" id="Q801X6"/>
<dbReference type="OrthoDB" id="5563016at2759"/>
<dbReference type="PhylomeDB" id="Q801X6"/>
<dbReference type="PRO" id="PR:Q801X6"/>
<dbReference type="Proteomes" id="UP000000539">
    <property type="component" value="Unassembled WGS sequence"/>
</dbReference>
<dbReference type="GO" id="GO:0005829">
    <property type="term" value="C:cytosol"/>
    <property type="evidence" value="ECO:0000250"/>
    <property type="project" value="UniProtKB"/>
</dbReference>
<dbReference type="GO" id="GO:0005634">
    <property type="term" value="C:nucleus"/>
    <property type="evidence" value="ECO:0000250"/>
    <property type="project" value="UniProtKB"/>
</dbReference>
<dbReference type="GO" id="GO:0045202">
    <property type="term" value="C:synapse"/>
    <property type="evidence" value="ECO:0007669"/>
    <property type="project" value="UniProtKB-SubCell"/>
</dbReference>
<dbReference type="GO" id="GO:0003779">
    <property type="term" value="F:actin binding"/>
    <property type="evidence" value="ECO:0000250"/>
    <property type="project" value="UniProtKB"/>
</dbReference>
<dbReference type="GO" id="GO:0004864">
    <property type="term" value="F:protein phosphatase inhibitor activity"/>
    <property type="evidence" value="ECO:0007669"/>
    <property type="project" value="UniProtKB-KW"/>
</dbReference>
<dbReference type="GO" id="GO:0030036">
    <property type="term" value="P:actin cytoskeleton organization"/>
    <property type="evidence" value="ECO:0000250"/>
    <property type="project" value="UniProtKB"/>
</dbReference>
<dbReference type="GO" id="GO:0031032">
    <property type="term" value="P:actomyosin structure organization"/>
    <property type="evidence" value="ECO:0000250"/>
    <property type="project" value="UniProtKB"/>
</dbReference>
<dbReference type="GO" id="GO:0048870">
    <property type="term" value="P:cell motility"/>
    <property type="evidence" value="ECO:0000318"/>
    <property type="project" value="GO_Central"/>
</dbReference>
<dbReference type="GO" id="GO:0043149">
    <property type="term" value="P:stress fiber assembly"/>
    <property type="evidence" value="ECO:0000250"/>
    <property type="project" value="UniProtKB"/>
</dbReference>
<dbReference type="Gene3D" id="6.10.140.1750">
    <property type="match status" value="1"/>
</dbReference>
<dbReference type="Gene3D" id="6.10.140.2130">
    <property type="match status" value="1"/>
</dbReference>
<dbReference type="InterPro" id="IPR004018">
    <property type="entry name" value="RPEL_repeat"/>
</dbReference>
<dbReference type="PANTHER" id="PTHR12751:SF6">
    <property type="entry name" value="PHOSPHATASE AND ACTIN REGULATOR 1"/>
    <property type="match status" value="1"/>
</dbReference>
<dbReference type="PANTHER" id="PTHR12751">
    <property type="entry name" value="PHOSPHATASE AND ACTIN REGULATOR PHACTR"/>
    <property type="match status" value="1"/>
</dbReference>
<dbReference type="Pfam" id="PF02755">
    <property type="entry name" value="RPEL"/>
    <property type="match status" value="3"/>
</dbReference>
<dbReference type="SMART" id="SM00707">
    <property type="entry name" value="RPEL"/>
    <property type="match status" value="4"/>
</dbReference>
<dbReference type="PROSITE" id="PS51073">
    <property type="entry name" value="RPEL"/>
    <property type="match status" value="4"/>
</dbReference>
<feature type="chain" id="PRO_0000235991" description="Phosphatase and actin regulator 1">
    <location>
        <begin position="1"/>
        <end position="501"/>
    </location>
</feature>
<feature type="repeat" description="RPEL 1">
    <location>
        <begin position="1"/>
        <end position="18"/>
    </location>
</feature>
<feature type="repeat" description="RPEL 2">
    <location>
        <begin position="343"/>
        <end position="368"/>
    </location>
</feature>
<feature type="repeat" description="RPEL 3">
    <location>
        <begin position="381"/>
        <end position="406"/>
    </location>
</feature>
<feature type="repeat" description="RPEL 4">
    <location>
        <begin position="419"/>
        <end position="444"/>
    </location>
</feature>
<feature type="region of interest" description="Disordered" evidence="2">
    <location>
        <begin position="21"/>
        <end position="46"/>
    </location>
</feature>
<feature type="region of interest" description="Disordered" evidence="2">
    <location>
        <begin position="295"/>
        <end position="329"/>
    </location>
</feature>
<feature type="region of interest" description="Disordered" evidence="2">
    <location>
        <begin position="382"/>
        <end position="415"/>
    </location>
</feature>
<feature type="compositionally biased region" description="Low complexity" evidence="2">
    <location>
        <begin position="36"/>
        <end position="46"/>
    </location>
</feature>
<feature type="compositionally biased region" description="Basic and acidic residues" evidence="2">
    <location>
        <begin position="295"/>
        <end position="304"/>
    </location>
</feature>
<feature type="compositionally biased region" description="Acidic residues" evidence="2">
    <location>
        <begin position="317"/>
        <end position="328"/>
    </location>
</feature>
<feature type="compositionally biased region" description="Basic and acidic residues" evidence="2">
    <location>
        <begin position="392"/>
        <end position="415"/>
    </location>
</feature>
<evidence type="ECO:0000250" key="1"/>
<evidence type="ECO:0000256" key="2">
    <source>
        <dbReference type="SAM" id="MobiDB-lite"/>
    </source>
</evidence>
<evidence type="ECO:0000269" key="3">
    <source>
    </source>
</evidence>
<evidence type="ECO:0000305" key="4"/>
<reference key="1">
    <citation type="journal article" date="2003" name="Gene Expr. Patterns">
        <title>Expression of DDSG1, a novel gene encoding a putative DNA-binding protein in the embryonic chicken nervous system.</title>
        <authorList>
            <person name="Shin M."/>
            <person name="Fukuda K."/>
            <person name="Yasugi S."/>
        </authorList>
    </citation>
    <scope>NUCLEOTIDE SEQUENCE [MRNA]</scope>
    <scope>TISSUE SPECIFICITY</scope>
</reference>
<sequence length="501" mass="56095">MRQSREELIKRGVLKEIFDKDGELSIPNEEGALENGQPLGSGQVLSSSQVSLPALAELESGSAPGEPCSYEVLPTTEITDGTVSEESPTSNESGVLLSQDPTAKPVLLLPPKKSAAFPGDHEDTPVKQLSLLKQPPALPPKPIARIASHLTDPGAPVKLPCMPVKLSPPLPPKKVMICMPLGGPDLSSLSSYSTQKSSQQPLTQHHHTVLPSQLAAHQHQLQYGSHSQHLPSGSSTLPIHPSGCRMIEELNKTLAMTMQRLESSGLHTGDNVTKTGPGGLPDMRQVPTVVIECDDNKENVPHEADYEDSSCLYPRQEEEEEEDEDEDNSLFTSSLAMKVCRKDSLAIKLSNRPSKRELEEKNILPMQTDEERLELRQQIGTKLTRRLSQRPTAEELEQRNILKPRNEQEEQEEKREIKRRLTRKLSQRPTVEELRERKILIRFSDYVEVADAQDYDRRADKPWTRLTAADKAAIRKELNEFKSSEMEVHELSRHLTRFHRP</sequence>